<comment type="function">
    <text evidence="6 7">Pore-forming subunit of the CatSper complex, a sperm-specific voltage-gated calcium channel that plays a central role in calcium-dependent physiological responses essential for successful fertilization, such as sperm hyperactivation, acrosome reaction and chemotaxis towards the oocyte.</text>
</comment>
<comment type="catalytic activity">
    <reaction evidence="10 11">
        <text>Ca(2+)(in) = Ca(2+)(out)</text>
        <dbReference type="Rhea" id="RHEA:29671"/>
        <dbReference type="ChEBI" id="CHEBI:29108"/>
    </reaction>
</comment>
<comment type="activity regulation">
    <text evidence="6 7 8">The CatSper calcium channel is indirectly activated by extracellular progesterone and prostaglandins following the sequence: progesterone &gt; PGF1-alpha = PGE1 &gt; PGA1 &gt; PGE2 &gt;&gt; PGD2 (PubMed:21412338, PubMed:21412339, PubMed:26989199). The CatSper calcium channel is directly inhibited by endocannabinoid 2-arachidonoylglycerol (2AG) (PubMed:26989199). Indirect activation by progesterone takes place via the following mechanism: progesterone binds and activates the acylglycerol lipase ABHD2, which in turn mediates hydrolysis of 2AG inhibitor, relieving inhibition of the CatSper channel (PubMed:26989199). The primary effect of progesterone activation is to shift voltage dependence towards more physiological, negative membrane potentials; it is not mediated by metabotropic receptors and second messengers (PubMed:21412338, PubMed:21412339). Sperm capacitation enhances the effect of progesterone by providing additional negative shift. Also activated by the elevation of intracellular pH (PubMed:21412338, PubMed:21412339).</text>
</comment>
<comment type="subunit">
    <text evidence="1 2">Component of the CatSper complex or CatSpermasome composed of the core pore-forming members CATSPER1, CATSPER2, CATSPER3 and CATSPER4 as well as auxiliary members CATSPERB, CATSPERG, CATSPERD, CATSPERE, CATSPERZ, C2CD6/CATSPERT, TMEM249, TMEM262 and EFCAB9 (By similarity). HSPA1 may be an additional auxiliary complex member (By similarity). The core complex members CATSPER1, CATSPER2, CATSPER3 and CATSPER4 form a heterotetrameric channel. The auxiliary CATSPERB, CATSPERG, CATSPERD and CATSPERE subunits form a pavilion-like structure over the pore which stabilizes the complex through interactions with CATSPER4, CATSPER3, CATSPER1 and CATSPER2 respectively (By similarity). TMEM262/CATSPERH interacts with CATSPERB, further stabilizing the complex. C2CD6/CATSPERT interacts at least with CATSPERD and is required for targeting the CatSper complex in the flagellar membrane (By similarity).</text>
</comment>
<comment type="subcellular location">
    <subcellularLocation>
        <location evidence="1">Cell projection</location>
        <location evidence="1">Cilium</location>
        <location evidence="1">Flagellum membrane</location>
        <topology evidence="1">Multi-pass membrane protein</topology>
    </subcellularLocation>
</comment>
<comment type="tissue specificity">
    <text evidence="3 4 5">Testis-specific.</text>
</comment>
<comment type="similarity">
    <text evidence="9">Belongs to the cation channel sperm-associated (TC 1.A.1.19) family.</text>
</comment>
<comment type="caution">
    <text evidence="9">In mouse, Slco6c1 is an additional auxiliary subunit of the CatSper complex. It is unclear if the related SLCO6A1 protein performs the same role in non-rodent species.</text>
</comment>
<name>CTSR3_HUMAN</name>
<evidence type="ECO:0000250" key="1">
    <source>
        <dbReference type="UniProtKB" id="Q80W99"/>
    </source>
</evidence>
<evidence type="ECO:0000250" key="2">
    <source>
        <dbReference type="UniProtKB" id="Q91ZR5"/>
    </source>
</evidence>
<evidence type="ECO:0000269" key="3">
    <source>
    </source>
</evidence>
<evidence type="ECO:0000269" key="4">
    <source>
    </source>
</evidence>
<evidence type="ECO:0000269" key="5">
    <source>
    </source>
</evidence>
<evidence type="ECO:0000269" key="6">
    <source>
    </source>
</evidence>
<evidence type="ECO:0000269" key="7">
    <source>
    </source>
</evidence>
<evidence type="ECO:0000269" key="8">
    <source>
    </source>
</evidence>
<evidence type="ECO:0000305" key="9"/>
<evidence type="ECO:0000305" key="10">
    <source>
    </source>
</evidence>
<evidence type="ECO:0000305" key="11">
    <source>
    </source>
</evidence>
<protein>
    <recommendedName>
        <fullName>Cation channel sperm-associated protein 3</fullName>
        <shortName>CatSper3</shortName>
    </recommendedName>
    <alternativeName>
        <fullName>Ca(v)-like protein</fullName>
    </alternativeName>
    <alternativeName>
        <fullName>One-repeat calcium channel-like protein</fullName>
    </alternativeName>
</protein>
<feature type="chain" id="PRO_0000295679" description="Cation channel sperm-associated protein 3">
    <location>
        <begin position="1"/>
        <end position="398"/>
    </location>
</feature>
<feature type="topological domain" description="Cytoplasmic" evidence="1">
    <location>
        <begin position="1"/>
        <end position="48"/>
    </location>
</feature>
<feature type="transmembrane region" description="Helical; Name=Segment S1" evidence="1">
    <location>
        <begin position="49"/>
        <end position="71"/>
    </location>
</feature>
<feature type="topological domain" description="Extracellular" evidence="1">
    <location>
        <begin position="72"/>
        <end position="80"/>
    </location>
</feature>
<feature type="transmembrane region" description="Helical; Name=Segment S2" evidence="1">
    <location>
        <begin position="81"/>
        <end position="107"/>
    </location>
</feature>
<feature type="topological domain" description="Cytoplasmic" evidence="1">
    <location>
        <position position="108"/>
    </location>
</feature>
<feature type="transmembrane region" description="Helical; Name=Segment S3" evidence="1">
    <location>
        <begin position="109"/>
        <end position="131"/>
    </location>
</feature>
<feature type="topological domain" description="Extracellular" evidence="1">
    <location>
        <begin position="132"/>
        <end position="143"/>
    </location>
</feature>
<feature type="transmembrane region" description="Helical; Name=Segment S4" evidence="1">
    <location>
        <begin position="144"/>
        <end position="160"/>
    </location>
</feature>
<feature type="topological domain" description="Cytoplasmic" evidence="1">
    <location>
        <begin position="161"/>
        <end position="168"/>
    </location>
</feature>
<feature type="transmembrane region" description="Helical; Name=Segment S5" evidence="1">
    <location>
        <begin position="169"/>
        <end position="195"/>
    </location>
</feature>
<feature type="topological domain" description="Extracellular" evidence="1">
    <location>
        <begin position="196"/>
        <end position="216"/>
    </location>
</feature>
<feature type="intramembrane region" description="Helical; Pore-forming" evidence="1">
    <location>
        <begin position="217"/>
        <end position="236"/>
    </location>
</feature>
<feature type="topological domain" description="Extracellular" evidence="1">
    <location>
        <begin position="237"/>
        <end position="242"/>
    </location>
</feature>
<feature type="transmembrane region" description="Helical; Name=Segment S6" evidence="1">
    <location>
        <begin position="243"/>
        <end position="268"/>
    </location>
</feature>
<feature type="topological domain" description="Cytoplasmic" evidence="1">
    <location>
        <begin position="269"/>
        <end position="398"/>
    </location>
</feature>
<feature type="sequence variant" id="VAR_033309" description="In dbSNP:rs3896260.">
    <original>N</original>
    <variation>K</variation>
    <location>
        <position position="204"/>
    </location>
</feature>
<organism>
    <name type="scientific">Homo sapiens</name>
    <name type="common">Human</name>
    <dbReference type="NCBI Taxonomy" id="9606"/>
    <lineage>
        <taxon>Eukaryota</taxon>
        <taxon>Metazoa</taxon>
        <taxon>Chordata</taxon>
        <taxon>Craniata</taxon>
        <taxon>Vertebrata</taxon>
        <taxon>Euteleostomi</taxon>
        <taxon>Mammalia</taxon>
        <taxon>Eutheria</taxon>
        <taxon>Euarchontoglires</taxon>
        <taxon>Primates</taxon>
        <taxon>Haplorrhini</taxon>
        <taxon>Catarrhini</taxon>
        <taxon>Hominidae</taxon>
        <taxon>Homo</taxon>
    </lineage>
</organism>
<dbReference type="EMBL" id="AF432876">
    <property type="protein sequence ID" value="AAO85416.1"/>
    <property type="molecule type" value="mRNA"/>
</dbReference>
<dbReference type="EMBL" id="AY156951">
    <property type="protein sequence ID" value="AAO13012.1"/>
    <property type="molecule type" value="mRNA"/>
</dbReference>
<dbReference type="EMBL" id="BC101692">
    <property type="protein sequence ID" value="AAI01693.1"/>
    <property type="molecule type" value="mRNA"/>
</dbReference>
<dbReference type="EMBL" id="BC110384">
    <property type="protein sequence ID" value="AAI10385.1"/>
    <property type="molecule type" value="mRNA"/>
</dbReference>
<dbReference type="EMBL" id="BN000272">
    <property type="protein sequence ID" value="CAE30476.1"/>
    <property type="molecule type" value="mRNA"/>
</dbReference>
<dbReference type="CCDS" id="CCDS4181.1"/>
<dbReference type="RefSeq" id="NP_821138.1">
    <property type="nucleotide sequence ID" value="NM_178019.3"/>
</dbReference>
<dbReference type="SMR" id="Q86XQ3"/>
<dbReference type="ComplexPortal" id="CPX-9165">
    <property type="entry name" value="CatSpermasome complex"/>
</dbReference>
<dbReference type="FunCoup" id="Q86XQ3">
    <property type="interactions" value="8"/>
</dbReference>
<dbReference type="STRING" id="9606.ENSP00000282611"/>
<dbReference type="DrugCentral" id="Q86XQ3"/>
<dbReference type="GuidetoPHARMACOLOGY" id="390"/>
<dbReference type="TCDB" id="1.A.1.19.1">
    <property type="family name" value="the voltage-gated ion channel (vic) superfamily"/>
</dbReference>
<dbReference type="iPTMnet" id="Q86XQ3"/>
<dbReference type="PhosphoSitePlus" id="Q86XQ3"/>
<dbReference type="BioMuta" id="CATSPER3"/>
<dbReference type="DMDM" id="74714131"/>
<dbReference type="jPOST" id="Q86XQ3"/>
<dbReference type="MassIVE" id="Q86XQ3"/>
<dbReference type="PaxDb" id="9606-ENSP00000282611"/>
<dbReference type="PeptideAtlas" id="Q86XQ3"/>
<dbReference type="ProteomicsDB" id="70315"/>
<dbReference type="Antibodypedia" id="26383">
    <property type="antibodies" value="63 antibodies from 16 providers"/>
</dbReference>
<dbReference type="DNASU" id="347732"/>
<dbReference type="Ensembl" id="ENST00000282611.8">
    <property type="protein sequence ID" value="ENSP00000282611.6"/>
    <property type="gene ID" value="ENSG00000152705.8"/>
</dbReference>
<dbReference type="GeneID" id="347732"/>
<dbReference type="KEGG" id="hsa:347732"/>
<dbReference type="MANE-Select" id="ENST00000282611.8">
    <property type="protein sequence ID" value="ENSP00000282611.6"/>
    <property type="RefSeq nucleotide sequence ID" value="NM_178019.3"/>
    <property type="RefSeq protein sequence ID" value="NP_821138.1"/>
</dbReference>
<dbReference type="UCSC" id="uc003lag.3">
    <property type="organism name" value="human"/>
</dbReference>
<dbReference type="AGR" id="HGNC:20819"/>
<dbReference type="CTD" id="347732"/>
<dbReference type="DisGeNET" id="347732"/>
<dbReference type="GeneCards" id="CATSPER3"/>
<dbReference type="HGNC" id="HGNC:20819">
    <property type="gene designation" value="CATSPER3"/>
</dbReference>
<dbReference type="HPA" id="ENSG00000152705">
    <property type="expression patterns" value="Tissue enriched (testis)"/>
</dbReference>
<dbReference type="MIM" id="609120">
    <property type="type" value="gene"/>
</dbReference>
<dbReference type="neXtProt" id="NX_Q86XQ3"/>
<dbReference type="OpenTargets" id="ENSG00000152705"/>
<dbReference type="PharmGKB" id="PA134911185"/>
<dbReference type="VEuPathDB" id="HostDB:ENSG00000152705"/>
<dbReference type="eggNOG" id="KOG2301">
    <property type="taxonomic scope" value="Eukaryota"/>
</dbReference>
<dbReference type="GeneTree" id="ENSGT00940000161455"/>
<dbReference type="HOGENOM" id="CLU_058058_0_0_1"/>
<dbReference type="InParanoid" id="Q86XQ3"/>
<dbReference type="OMA" id="YETMAVY"/>
<dbReference type="OrthoDB" id="416585at2759"/>
<dbReference type="PAN-GO" id="Q86XQ3">
    <property type="GO annotations" value="6 GO annotations based on evolutionary models"/>
</dbReference>
<dbReference type="PhylomeDB" id="Q86XQ3"/>
<dbReference type="TreeFam" id="TF343841"/>
<dbReference type="PathwayCommons" id="Q86XQ3"/>
<dbReference type="Reactome" id="R-HSA-1300642">
    <property type="pathway name" value="Sperm Motility And Taxes"/>
</dbReference>
<dbReference type="BioGRID-ORCS" id="347732">
    <property type="hits" value="11 hits in 1145 CRISPR screens"/>
</dbReference>
<dbReference type="GeneWiki" id="CatSper3"/>
<dbReference type="GenomeRNAi" id="347732"/>
<dbReference type="Pharos" id="Q86XQ3">
    <property type="development level" value="Tchem"/>
</dbReference>
<dbReference type="PRO" id="PR:Q86XQ3"/>
<dbReference type="Proteomes" id="UP000005640">
    <property type="component" value="Chromosome 5"/>
</dbReference>
<dbReference type="RNAct" id="Q86XQ3">
    <property type="molecule type" value="protein"/>
</dbReference>
<dbReference type="Bgee" id="ENSG00000152705">
    <property type="expression patterns" value="Expressed in sperm and 101 other cell types or tissues"/>
</dbReference>
<dbReference type="GO" id="GO:0001669">
    <property type="term" value="C:acrosomal vesicle"/>
    <property type="evidence" value="ECO:0000318"/>
    <property type="project" value="GO_Central"/>
</dbReference>
<dbReference type="GO" id="GO:0036128">
    <property type="term" value="C:CatSper complex"/>
    <property type="evidence" value="ECO:0000250"/>
    <property type="project" value="UniProtKB"/>
</dbReference>
<dbReference type="GO" id="GO:0005783">
    <property type="term" value="C:endoplasmic reticulum"/>
    <property type="evidence" value="ECO:0007669"/>
    <property type="project" value="Ensembl"/>
</dbReference>
<dbReference type="GO" id="GO:0031514">
    <property type="term" value="C:motile cilium"/>
    <property type="evidence" value="ECO:0007669"/>
    <property type="project" value="UniProtKB-KW"/>
</dbReference>
<dbReference type="GO" id="GO:0005886">
    <property type="term" value="C:plasma membrane"/>
    <property type="evidence" value="ECO:0000304"/>
    <property type="project" value="Reactome"/>
</dbReference>
<dbReference type="GO" id="GO:0005245">
    <property type="term" value="F:voltage-gated calcium channel activity"/>
    <property type="evidence" value="ECO:0000250"/>
    <property type="project" value="UniProtKB"/>
</dbReference>
<dbReference type="GO" id="GO:0051649">
    <property type="term" value="P:establishment of localization in cell"/>
    <property type="evidence" value="ECO:0007669"/>
    <property type="project" value="Ensembl"/>
</dbReference>
<dbReference type="GO" id="GO:0030317">
    <property type="term" value="P:flagellated sperm motility"/>
    <property type="evidence" value="ECO:0000318"/>
    <property type="project" value="GO_Central"/>
</dbReference>
<dbReference type="GO" id="GO:0006814">
    <property type="term" value="P:sodium ion transport"/>
    <property type="evidence" value="ECO:0000250"/>
    <property type="project" value="UniProtKB"/>
</dbReference>
<dbReference type="GO" id="GO:0048240">
    <property type="term" value="P:sperm capacitation"/>
    <property type="evidence" value="ECO:0000318"/>
    <property type="project" value="GO_Central"/>
</dbReference>
<dbReference type="FunFam" id="1.10.287.70:FF:000186">
    <property type="entry name" value="Cation channel sperm-associated protein 3"/>
    <property type="match status" value="1"/>
</dbReference>
<dbReference type="FunFam" id="1.20.120.350:FF:000111">
    <property type="entry name" value="Cation channel sperm-associated protein 3"/>
    <property type="match status" value="1"/>
</dbReference>
<dbReference type="Gene3D" id="1.10.287.70">
    <property type="match status" value="1"/>
</dbReference>
<dbReference type="Gene3D" id="1.20.120.350">
    <property type="entry name" value="Voltage-gated potassium channels. Chain C"/>
    <property type="match status" value="1"/>
</dbReference>
<dbReference type="InterPro" id="IPR005821">
    <property type="entry name" value="Ion_trans_dom"/>
</dbReference>
<dbReference type="InterPro" id="IPR027359">
    <property type="entry name" value="Volt_channel_dom_sf"/>
</dbReference>
<dbReference type="PANTHER" id="PTHR47131">
    <property type="entry name" value="CATION CHANNEL SPERM-ASSOCIATED PROTEIN 3"/>
    <property type="match status" value="1"/>
</dbReference>
<dbReference type="PANTHER" id="PTHR47131:SF1">
    <property type="entry name" value="CATION CHANNEL SPERM-ASSOCIATED PROTEIN 3"/>
    <property type="match status" value="1"/>
</dbReference>
<dbReference type="Pfam" id="PF00520">
    <property type="entry name" value="Ion_trans"/>
    <property type="match status" value="1"/>
</dbReference>
<dbReference type="SUPFAM" id="SSF81324">
    <property type="entry name" value="Voltage-gated potassium channels"/>
    <property type="match status" value="1"/>
</dbReference>
<keyword id="KW-0106">Calcium</keyword>
<keyword id="KW-0107">Calcium channel</keyword>
<keyword id="KW-0109">Calcium transport</keyword>
<keyword id="KW-1003">Cell membrane</keyword>
<keyword id="KW-0966">Cell projection</keyword>
<keyword id="KW-0969">Cilium</keyword>
<keyword id="KW-0217">Developmental protein</keyword>
<keyword id="KW-0221">Differentiation</keyword>
<keyword id="KW-0282">Flagellum</keyword>
<keyword id="KW-0407">Ion channel</keyword>
<keyword id="KW-0406">Ion transport</keyword>
<keyword id="KW-0472">Membrane</keyword>
<keyword id="KW-1267">Proteomics identification</keyword>
<keyword id="KW-1185">Reference proteome</keyword>
<keyword id="KW-0744">Spermatogenesis</keyword>
<keyword id="KW-0812">Transmembrane</keyword>
<keyword id="KW-1133">Transmembrane helix</keyword>
<keyword id="KW-0813">Transport</keyword>
<keyword id="KW-0851">Voltage-gated channel</keyword>
<proteinExistence type="evidence at protein level"/>
<gene>
    <name type="primary">CATSPER3</name>
</gene>
<sequence>MSQHRHQRHSRVISSSPVDTTSVGFCPTFKKFKRNDDECRAFVKRVIMSRFFKIIMISTVTSNAFFMALWTSYDIRYRLFRLLEFSEIFFVSICTSELSMKVYVDPINYWKNGYNLLDVIIIIVMFLPYALRQLMGKQFTYLYIADGMQSLRILKLIGYSQGIRTLITAVGQTVYTVASVLLLLFLLMYIFAILGFCLFGSPDNGDHDNWGNLAAAFFTLFSLATVDGWTDLQKQLDNREFALSRAFTIIFILLASFIFLNMFVGVMIMHTEDSIRKFERELMLEQQEMLMGEKQVILQRQQEEISRLMHIQKNADCTSFSELVENFKKTLSHTDPMVLDDFGTSLPFIDIYFSTLDYQDTTVHKLQELYYEIVHVLSLMLEDLPQEKPQSLEKVDEK</sequence>
<accession>Q86XQ3</accession>
<accession>Q86XS6</accession>
<reference key="1">
    <citation type="journal article" date="2003" name="Biochem. Biophys. Res. Commun.">
        <title>Cloning of a novel one-repeat calcium channel-like gene.</title>
        <authorList>
            <person name="Arias J.M."/>
            <person name="Murbartian J."/>
            <person name="Perez-Reyes E."/>
        </authorList>
    </citation>
    <scope>NUCLEOTIDE SEQUENCE [MRNA]</scope>
    <scope>TISSUE SPECIFICITY</scope>
</reference>
<reference key="2">
    <citation type="journal article" date="2004" name="Genome Res.">
        <title>The status, quality, and expansion of the NIH full-length cDNA project: the Mammalian Gene Collection (MGC).</title>
        <authorList>
            <consortium name="The MGC Project Team"/>
        </authorList>
    </citation>
    <scope>NUCLEOTIDE SEQUENCE [LARGE SCALE MRNA]</scope>
    <source>
        <tissue>Brain</tissue>
        <tissue>Cerebellum</tissue>
    </source>
</reference>
<reference key="3">
    <citation type="journal article" date="2003" name="Reprod. Biol. Endocrinol.">
        <title>Identification of human and mouse CatSper3 and CatSper4 genes: characterisation of a common interaction domain and evidence for expression in testis.</title>
        <authorList>
            <person name="Lobley A."/>
            <person name="Pierron V."/>
            <person name="Reynolds L."/>
            <person name="Allen L."/>
            <person name="Michalovich D."/>
        </authorList>
    </citation>
    <scope>IDENTIFICATION</scope>
    <scope>TISSUE SPECIFICITY</scope>
</reference>
<reference key="4">
    <citation type="journal article" date="2007" name="Mol. Hum. Reprod.">
        <title>Expression of CatSper family transcripts in the mouse testis during post-natal development and human ejaculated spermatozoa: relationship to sperm motility.</title>
        <authorList>
            <person name="Li H.-G."/>
            <person name="Ding X.-F."/>
            <person name="Liao A.-H."/>
            <person name="Kong X.-B."/>
            <person name="Xiong C.-L."/>
        </authorList>
    </citation>
    <scope>TISSUE SPECIFICITY</scope>
</reference>
<reference key="5">
    <citation type="journal article" date="2011" name="Nature">
        <title>The CatSper channel mediates progesterone-induced Ca2+ influx in human sperm.</title>
        <authorList>
            <person name="Strunker T."/>
            <person name="Goodwin N."/>
            <person name="Brenker C."/>
            <person name="Kashikar N.D."/>
            <person name="Weyand I."/>
            <person name="Seifert R."/>
            <person name="Kaupp U.B."/>
        </authorList>
    </citation>
    <scope>FUNCTION</scope>
    <scope>TRANSPORTER ACTIVITY</scope>
    <scope>ACTIVITY REGULATION</scope>
</reference>
<reference key="6">
    <citation type="journal article" date="2011" name="Nature">
        <title>Progesterone activates the principal Ca2+ channel of human sperm.</title>
        <authorList>
            <person name="Lishko P.V."/>
            <person name="Botchkina I.L."/>
            <person name="Kirichok Y."/>
        </authorList>
    </citation>
    <scope>FUNCTION</scope>
    <scope>TRANSPORTER ACTIVITY</scope>
    <scope>ACTIVITY REGULATION</scope>
</reference>
<reference key="7">
    <citation type="journal article" date="2016" name="Science">
        <title>Unconventional endocannabinoid signaling governs sperm activation via sex hormone progesterone.</title>
        <authorList>
            <person name="Miller M.R."/>
            <person name="Mannowetz N."/>
            <person name="Iavarone A.T."/>
            <person name="Safavi R."/>
            <person name="Gracheva E.O."/>
            <person name="Smith J.F."/>
            <person name="Hill R.Z."/>
            <person name="Bautista D.M."/>
            <person name="Kirichok Y."/>
            <person name="Lishko P.V."/>
        </authorList>
    </citation>
    <scope>ACTIVITY REGULATION</scope>
</reference>